<accession>C3MJ30</accession>
<proteinExistence type="inferred from homology"/>
<organism>
    <name type="scientific">Saccharolobus islandicus (strain L.S.2.15 / Lassen #1)</name>
    <name type="common">Sulfolobus islandicus</name>
    <dbReference type="NCBI Taxonomy" id="429572"/>
    <lineage>
        <taxon>Archaea</taxon>
        <taxon>Thermoproteota</taxon>
        <taxon>Thermoprotei</taxon>
        <taxon>Sulfolobales</taxon>
        <taxon>Sulfolobaceae</taxon>
        <taxon>Saccharolobus</taxon>
    </lineage>
</organism>
<feature type="chain" id="PRO_1000212316" description="Peptidyl-tRNA hydrolase">
    <location>
        <begin position="1"/>
        <end position="120"/>
    </location>
</feature>
<keyword id="KW-0963">Cytoplasm</keyword>
<keyword id="KW-0378">Hydrolase</keyword>
<name>PTH_SACI2</name>
<evidence type="ECO:0000255" key="1">
    <source>
        <dbReference type="HAMAP-Rule" id="MF_00628"/>
    </source>
</evidence>
<reference key="1">
    <citation type="journal article" date="2009" name="Proc. Natl. Acad. Sci. U.S.A.">
        <title>Biogeography of the Sulfolobus islandicus pan-genome.</title>
        <authorList>
            <person name="Reno M.L."/>
            <person name="Held N.L."/>
            <person name="Fields C.J."/>
            <person name="Burke P.V."/>
            <person name="Whitaker R.J."/>
        </authorList>
    </citation>
    <scope>NUCLEOTIDE SEQUENCE [LARGE SCALE GENOMIC DNA]</scope>
    <source>
        <strain>L.S.2.15 / Lassen #1</strain>
    </source>
</reference>
<sequence length="120" mass="13147">MVKMVIVVRSDIKMGKGKMAAQVAHAAVTLVISIINSNNSRWKEWLNEWLQQGQPKIVVKANSLDEIILRSKKAETMNLPFSIIEDAGKTQLEPGTITCLGIGPAPENLIDPITGDLKLL</sequence>
<dbReference type="EC" id="3.1.1.29" evidence="1"/>
<dbReference type="EMBL" id="CP001399">
    <property type="protein sequence ID" value="ACP36117.1"/>
    <property type="molecule type" value="Genomic_DNA"/>
</dbReference>
<dbReference type="SMR" id="C3MJ30"/>
<dbReference type="KEGG" id="sis:LS215_2125"/>
<dbReference type="HOGENOM" id="CLU_073661_2_2_2"/>
<dbReference type="OrthoDB" id="6075at2157"/>
<dbReference type="Proteomes" id="UP000001747">
    <property type="component" value="Chromosome"/>
</dbReference>
<dbReference type="GO" id="GO:0005829">
    <property type="term" value="C:cytosol"/>
    <property type="evidence" value="ECO:0007669"/>
    <property type="project" value="TreeGrafter"/>
</dbReference>
<dbReference type="GO" id="GO:0004045">
    <property type="term" value="F:peptidyl-tRNA hydrolase activity"/>
    <property type="evidence" value="ECO:0007669"/>
    <property type="project" value="UniProtKB-UniRule"/>
</dbReference>
<dbReference type="GO" id="GO:0006412">
    <property type="term" value="P:translation"/>
    <property type="evidence" value="ECO:0007669"/>
    <property type="project" value="UniProtKB-UniRule"/>
</dbReference>
<dbReference type="CDD" id="cd02430">
    <property type="entry name" value="PTH2"/>
    <property type="match status" value="1"/>
</dbReference>
<dbReference type="FunFam" id="3.40.1490.10:FF:000001">
    <property type="entry name" value="Peptidyl-tRNA hydrolase 2"/>
    <property type="match status" value="1"/>
</dbReference>
<dbReference type="Gene3D" id="3.40.1490.10">
    <property type="entry name" value="Bit1"/>
    <property type="match status" value="1"/>
</dbReference>
<dbReference type="HAMAP" id="MF_00628">
    <property type="entry name" value="Pept_tRNA_hydro_arch"/>
    <property type="match status" value="1"/>
</dbReference>
<dbReference type="InterPro" id="IPR023476">
    <property type="entry name" value="Pep_tRNA_hydro_II_dom_sf"/>
</dbReference>
<dbReference type="InterPro" id="IPR034759">
    <property type="entry name" value="Pept_tRNA_hydro_arch"/>
</dbReference>
<dbReference type="InterPro" id="IPR002833">
    <property type="entry name" value="PTH2"/>
</dbReference>
<dbReference type="NCBIfam" id="TIGR00283">
    <property type="entry name" value="arch_pth2"/>
    <property type="match status" value="1"/>
</dbReference>
<dbReference type="NCBIfam" id="NF003314">
    <property type="entry name" value="PRK04322.1"/>
    <property type="match status" value="1"/>
</dbReference>
<dbReference type="PANTHER" id="PTHR12649">
    <property type="entry name" value="PEPTIDYL-TRNA HYDROLASE 2"/>
    <property type="match status" value="1"/>
</dbReference>
<dbReference type="PANTHER" id="PTHR12649:SF11">
    <property type="entry name" value="PEPTIDYL-TRNA HYDROLASE 2, MITOCHONDRIAL"/>
    <property type="match status" value="1"/>
</dbReference>
<dbReference type="Pfam" id="PF01981">
    <property type="entry name" value="PTH2"/>
    <property type="match status" value="1"/>
</dbReference>
<dbReference type="SUPFAM" id="SSF102462">
    <property type="entry name" value="Peptidyl-tRNA hydrolase II"/>
    <property type="match status" value="1"/>
</dbReference>
<comment type="function">
    <text evidence="1">The natural substrate for this enzyme may be peptidyl-tRNAs which drop off the ribosome during protein synthesis.</text>
</comment>
<comment type="catalytic activity">
    <reaction evidence="1">
        <text>an N-acyl-L-alpha-aminoacyl-tRNA + H2O = an N-acyl-L-amino acid + a tRNA + H(+)</text>
        <dbReference type="Rhea" id="RHEA:54448"/>
        <dbReference type="Rhea" id="RHEA-COMP:10123"/>
        <dbReference type="Rhea" id="RHEA-COMP:13883"/>
        <dbReference type="ChEBI" id="CHEBI:15377"/>
        <dbReference type="ChEBI" id="CHEBI:15378"/>
        <dbReference type="ChEBI" id="CHEBI:59874"/>
        <dbReference type="ChEBI" id="CHEBI:78442"/>
        <dbReference type="ChEBI" id="CHEBI:138191"/>
        <dbReference type="EC" id="3.1.1.29"/>
    </reaction>
</comment>
<comment type="subcellular location">
    <subcellularLocation>
        <location evidence="1">Cytoplasm</location>
    </subcellularLocation>
</comment>
<comment type="similarity">
    <text evidence="1">Belongs to the PTH2 family.</text>
</comment>
<gene>
    <name evidence="1" type="primary">pth</name>
    <name type="ordered locus">LS215_2125</name>
</gene>
<protein>
    <recommendedName>
        <fullName evidence="1">Peptidyl-tRNA hydrolase</fullName>
        <shortName evidence="1">PTH</shortName>
        <ecNumber evidence="1">3.1.1.29</ecNumber>
    </recommendedName>
</protein>